<protein>
    <recommendedName>
        <fullName evidence="1">Large ribosomal subunit protein uL2</fullName>
    </recommendedName>
    <alternativeName>
        <fullName evidence="3">50S ribosomal protein L2</fullName>
    </alternativeName>
</protein>
<accession>Q82X85</accession>
<feature type="chain" id="PRO_0000129590" description="Large ribosomal subunit protein uL2">
    <location>
        <begin position="1"/>
        <end position="278"/>
    </location>
</feature>
<feature type="region of interest" description="Disordered" evidence="2">
    <location>
        <begin position="226"/>
        <end position="278"/>
    </location>
</feature>
<sequence length="278" mass="30462">MMALRKTKPTSPGRRAVIKSVNSFIYKGKPFAALTEKKKKNAGRNNSGRITVRHIGGGHKQHYRIVDFCRNKDDIPAKVERIEYDPNRSAYIALLCYADGERRYIIAAKDIEVGSYLVSGSSSPIKMGNAMPIRNIPVGSVIHCIELRPGKGAQLARSAGSSAQLMAKEGDYSQIRLRSGEIRKIHISCRATIGEVSNSEHNLQSIGKAGAIRWRGVRPTVRGVAMNPIDHPHGGGEGKTAAGRHPVSPWGTPSKGSRTRKNKRTSNMIVRSRYSKKG</sequence>
<keyword id="KW-1185">Reference proteome</keyword>
<keyword id="KW-0687">Ribonucleoprotein</keyword>
<keyword id="KW-0689">Ribosomal protein</keyword>
<keyword id="KW-0694">RNA-binding</keyword>
<keyword id="KW-0699">rRNA-binding</keyword>
<comment type="function">
    <text evidence="1">One of the primary rRNA binding proteins. Required for association of the 30S and 50S subunits to form the 70S ribosome, for tRNA binding and peptide bond formation. It has been suggested to have peptidyltransferase activity; this is somewhat controversial. Makes several contacts with the 16S rRNA in the 70S ribosome.</text>
</comment>
<comment type="subunit">
    <text evidence="1">Part of the 50S ribosomal subunit. Forms a bridge to the 30S subunit in the 70S ribosome.</text>
</comment>
<comment type="similarity">
    <text evidence="1">Belongs to the universal ribosomal protein uL2 family.</text>
</comment>
<dbReference type="EMBL" id="AL954747">
    <property type="protein sequence ID" value="CAD84315.1"/>
    <property type="molecule type" value="Genomic_DNA"/>
</dbReference>
<dbReference type="SMR" id="Q82X85"/>
<dbReference type="STRING" id="228410.NE0404"/>
<dbReference type="KEGG" id="neu:NE0404"/>
<dbReference type="eggNOG" id="COG0090">
    <property type="taxonomic scope" value="Bacteria"/>
</dbReference>
<dbReference type="HOGENOM" id="CLU_036235_2_1_4"/>
<dbReference type="PhylomeDB" id="Q82X85"/>
<dbReference type="Proteomes" id="UP000001416">
    <property type="component" value="Chromosome"/>
</dbReference>
<dbReference type="GO" id="GO:0015934">
    <property type="term" value="C:large ribosomal subunit"/>
    <property type="evidence" value="ECO:0007669"/>
    <property type="project" value="InterPro"/>
</dbReference>
<dbReference type="GO" id="GO:0019843">
    <property type="term" value="F:rRNA binding"/>
    <property type="evidence" value="ECO:0007669"/>
    <property type="project" value="UniProtKB-UniRule"/>
</dbReference>
<dbReference type="GO" id="GO:0003735">
    <property type="term" value="F:structural constituent of ribosome"/>
    <property type="evidence" value="ECO:0007669"/>
    <property type="project" value="InterPro"/>
</dbReference>
<dbReference type="GO" id="GO:0016740">
    <property type="term" value="F:transferase activity"/>
    <property type="evidence" value="ECO:0007669"/>
    <property type="project" value="InterPro"/>
</dbReference>
<dbReference type="GO" id="GO:0002181">
    <property type="term" value="P:cytoplasmic translation"/>
    <property type="evidence" value="ECO:0007669"/>
    <property type="project" value="TreeGrafter"/>
</dbReference>
<dbReference type="FunFam" id="2.30.30.30:FF:000001">
    <property type="entry name" value="50S ribosomal protein L2"/>
    <property type="match status" value="1"/>
</dbReference>
<dbReference type="FunFam" id="2.40.50.140:FF:000003">
    <property type="entry name" value="50S ribosomal protein L2"/>
    <property type="match status" value="1"/>
</dbReference>
<dbReference type="FunFam" id="4.10.950.10:FF:000001">
    <property type="entry name" value="50S ribosomal protein L2"/>
    <property type="match status" value="1"/>
</dbReference>
<dbReference type="Gene3D" id="2.30.30.30">
    <property type="match status" value="1"/>
</dbReference>
<dbReference type="Gene3D" id="2.40.50.140">
    <property type="entry name" value="Nucleic acid-binding proteins"/>
    <property type="match status" value="1"/>
</dbReference>
<dbReference type="Gene3D" id="4.10.950.10">
    <property type="entry name" value="Ribosomal protein L2, domain 3"/>
    <property type="match status" value="1"/>
</dbReference>
<dbReference type="HAMAP" id="MF_01320_B">
    <property type="entry name" value="Ribosomal_uL2_B"/>
    <property type="match status" value="1"/>
</dbReference>
<dbReference type="InterPro" id="IPR012340">
    <property type="entry name" value="NA-bd_OB-fold"/>
</dbReference>
<dbReference type="InterPro" id="IPR014722">
    <property type="entry name" value="Rib_uL2_dom2"/>
</dbReference>
<dbReference type="InterPro" id="IPR002171">
    <property type="entry name" value="Ribosomal_uL2"/>
</dbReference>
<dbReference type="InterPro" id="IPR005880">
    <property type="entry name" value="Ribosomal_uL2_bac/org-type"/>
</dbReference>
<dbReference type="InterPro" id="IPR022669">
    <property type="entry name" value="Ribosomal_uL2_C"/>
</dbReference>
<dbReference type="InterPro" id="IPR022671">
    <property type="entry name" value="Ribosomal_uL2_CS"/>
</dbReference>
<dbReference type="InterPro" id="IPR014726">
    <property type="entry name" value="Ribosomal_uL2_dom3"/>
</dbReference>
<dbReference type="InterPro" id="IPR022666">
    <property type="entry name" value="Ribosomal_uL2_RNA-bd_dom"/>
</dbReference>
<dbReference type="InterPro" id="IPR008991">
    <property type="entry name" value="Translation_prot_SH3-like_sf"/>
</dbReference>
<dbReference type="NCBIfam" id="TIGR01171">
    <property type="entry name" value="rplB_bact"/>
    <property type="match status" value="1"/>
</dbReference>
<dbReference type="PANTHER" id="PTHR13691:SF5">
    <property type="entry name" value="LARGE RIBOSOMAL SUBUNIT PROTEIN UL2M"/>
    <property type="match status" value="1"/>
</dbReference>
<dbReference type="PANTHER" id="PTHR13691">
    <property type="entry name" value="RIBOSOMAL PROTEIN L2"/>
    <property type="match status" value="1"/>
</dbReference>
<dbReference type="Pfam" id="PF00181">
    <property type="entry name" value="Ribosomal_L2"/>
    <property type="match status" value="1"/>
</dbReference>
<dbReference type="Pfam" id="PF03947">
    <property type="entry name" value="Ribosomal_L2_C"/>
    <property type="match status" value="1"/>
</dbReference>
<dbReference type="PIRSF" id="PIRSF002158">
    <property type="entry name" value="Ribosomal_L2"/>
    <property type="match status" value="1"/>
</dbReference>
<dbReference type="SMART" id="SM01383">
    <property type="entry name" value="Ribosomal_L2"/>
    <property type="match status" value="1"/>
</dbReference>
<dbReference type="SMART" id="SM01382">
    <property type="entry name" value="Ribosomal_L2_C"/>
    <property type="match status" value="1"/>
</dbReference>
<dbReference type="SUPFAM" id="SSF50249">
    <property type="entry name" value="Nucleic acid-binding proteins"/>
    <property type="match status" value="1"/>
</dbReference>
<dbReference type="SUPFAM" id="SSF50104">
    <property type="entry name" value="Translation proteins SH3-like domain"/>
    <property type="match status" value="1"/>
</dbReference>
<dbReference type="PROSITE" id="PS00467">
    <property type="entry name" value="RIBOSOMAL_L2"/>
    <property type="match status" value="1"/>
</dbReference>
<organism>
    <name type="scientific">Nitrosomonas europaea (strain ATCC 19718 / CIP 103999 / KCTC 2705 / NBRC 14298)</name>
    <dbReference type="NCBI Taxonomy" id="228410"/>
    <lineage>
        <taxon>Bacteria</taxon>
        <taxon>Pseudomonadati</taxon>
        <taxon>Pseudomonadota</taxon>
        <taxon>Betaproteobacteria</taxon>
        <taxon>Nitrosomonadales</taxon>
        <taxon>Nitrosomonadaceae</taxon>
        <taxon>Nitrosomonas</taxon>
    </lineage>
</organism>
<gene>
    <name evidence="1" type="primary">rplB</name>
    <name type="ordered locus">NE0404</name>
</gene>
<evidence type="ECO:0000255" key="1">
    <source>
        <dbReference type="HAMAP-Rule" id="MF_01320"/>
    </source>
</evidence>
<evidence type="ECO:0000256" key="2">
    <source>
        <dbReference type="SAM" id="MobiDB-lite"/>
    </source>
</evidence>
<evidence type="ECO:0000305" key="3"/>
<name>RL2_NITEU</name>
<proteinExistence type="inferred from homology"/>
<reference key="1">
    <citation type="journal article" date="2003" name="J. Bacteriol.">
        <title>Complete genome sequence of the ammonia-oxidizing bacterium and obligate chemolithoautotroph Nitrosomonas europaea.</title>
        <authorList>
            <person name="Chain P."/>
            <person name="Lamerdin J.E."/>
            <person name="Larimer F.W."/>
            <person name="Regala W."/>
            <person name="Lao V."/>
            <person name="Land M.L."/>
            <person name="Hauser L."/>
            <person name="Hooper A.B."/>
            <person name="Klotz M.G."/>
            <person name="Norton J."/>
            <person name="Sayavedra-Soto L.A."/>
            <person name="Arciero D.M."/>
            <person name="Hommes N.G."/>
            <person name="Whittaker M.M."/>
            <person name="Arp D.J."/>
        </authorList>
    </citation>
    <scope>NUCLEOTIDE SEQUENCE [LARGE SCALE GENOMIC DNA]</scope>
    <source>
        <strain>ATCC 19718 / CIP 103999 / KCTC 2705 / NBRC 14298</strain>
    </source>
</reference>